<proteinExistence type="inferred from homology"/>
<keyword id="KW-0028">Amino-acid biosynthesis</keyword>
<keyword id="KW-0055">Arginine biosynthesis</keyword>
<keyword id="KW-0067">ATP-binding</keyword>
<keyword id="KW-0963">Cytoplasm</keyword>
<keyword id="KW-0418">Kinase</keyword>
<keyword id="KW-0457">Lysine biosynthesis</keyword>
<keyword id="KW-0547">Nucleotide-binding</keyword>
<keyword id="KW-1185">Reference proteome</keyword>
<keyword id="KW-0808">Transferase</keyword>
<name>LYSZ_PYRAE</name>
<protein>
    <recommendedName>
        <fullName evidence="1">Putative [LysW]-aminoadipate/[LysW]-glutamate kinase</fullName>
        <ecNumber evidence="1">2.7.2.17</ecNumber>
        <ecNumber evidence="1">2.7.2.19</ecNumber>
    </recommendedName>
</protein>
<reference key="1">
    <citation type="journal article" date="2002" name="Proc. Natl. Acad. Sci. U.S.A.">
        <title>Genome sequence of the hyperthermophilic crenarchaeon Pyrobaculum aerophilum.</title>
        <authorList>
            <person name="Fitz-Gibbon S.T."/>
            <person name="Ladner H."/>
            <person name="Kim U.-J."/>
            <person name="Stetter K.O."/>
            <person name="Simon M.I."/>
            <person name="Miller J.H."/>
        </authorList>
    </citation>
    <scope>NUCLEOTIDE SEQUENCE [LARGE SCALE GENOMIC DNA]</scope>
    <source>
        <strain>ATCC 51768 / DSM 7523 / JCM 9630 / CIP 104966 / NBRC 100827 / IM2</strain>
    </source>
</reference>
<organism>
    <name type="scientific">Pyrobaculum aerophilum (strain ATCC 51768 / DSM 7523 / JCM 9630 / CIP 104966 / NBRC 100827 / IM2)</name>
    <dbReference type="NCBI Taxonomy" id="178306"/>
    <lineage>
        <taxon>Archaea</taxon>
        <taxon>Thermoproteota</taxon>
        <taxon>Thermoprotei</taxon>
        <taxon>Thermoproteales</taxon>
        <taxon>Thermoproteaceae</taxon>
        <taxon>Pyrobaculum</taxon>
    </lineage>
</organism>
<evidence type="ECO:0000255" key="1">
    <source>
        <dbReference type="HAMAP-Rule" id="MF_02082"/>
    </source>
</evidence>
<comment type="function">
    <text evidence="1">Involved in both the arginine and lysine biosynthetic pathways. Phosphorylates the LysW-bound precursors glutamate (for arginine biosynthesis), respectively alpha-aminoadipate (for lysine biosynthesis).</text>
</comment>
<comment type="catalytic activity">
    <reaction evidence="1">
        <text>[amino-group carrier protein]-C-terminal-N-(1,4-dicarboxybutan-1-yl)-L-glutamine + ATP = [amino-group carrier protein]-C-terminal-N-(1-carboxy-5-phosphooxy-5-oxopentan-1-yl)-L-glutamine + ADP</text>
        <dbReference type="Rhea" id="RHEA:41944"/>
        <dbReference type="Rhea" id="RHEA-COMP:9694"/>
        <dbReference type="Rhea" id="RHEA-COMP:9712"/>
        <dbReference type="ChEBI" id="CHEBI:30616"/>
        <dbReference type="ChEBI" id="CHEBI:78499"/>
        <dbReference type="ChEBI" id="CHEBI:78503"/>
        <dbReference type="ChEBI" id="CHEBI:456216"/>
        <dbReference type="EC" id="2.7.2.17"/>
    </reaction>
</comment>
<comment type="catalytic activity">
    <reaction evidence="1">
        <text>[amino-group carrier protein]-C-terminal-gamma-(L-glutamyl)-L-glutamate + ATP = [amino-group carrier protein]-C-terminal-gamma-(5-phospho-L-glutamyl)-L-glutamate + ADP</text>
        <dbReference type="Rhea" id="RHEA:52632"/>
        <dbReference type="Rhea" id="RHEA-COMP:13311"/>
        <dbReference type="Rhea" id="RHEA-COMP:13313"/>
        <dbReference type="ChEBI" id="CHEBI:30616"/>
        <dbReference type="ChEBI" id="CHEBI:136714"/>
        <dbReference type="ChEBI" id="CHEBI:136717"/>
        <dbReference type="ChEBI" id="CHEBI:456216"/>
        <dbReference type="EC" id="2.7.2.19"/>
    </reaction>
</comment>
<comment type="pathway">
    <text evidence="1">Amino-acid biosynthesis; L-lysine biosynthesis via AAA pathway; L-lysine from L-alpha-aminoadipate (Thermus route): step 2/5.</text>
</comment>
<comment type="pathway">
    <text evidence="1">Amino-acid biosynthesis; L-arginine biosynthesis.</text>
</comment>
<comment type="subcellular location">
    <subcellularLocation>
        <location evidence="1">Cytoplasm</location>
    </subcellularLocation>
</comment>
<comment type="similarity">
    <text evidence="1">Belongs to the acetylglutamate kinase family. LysZ subfamily.</text>
</comment>
<accession>Q8ZU99</accession>
<gene>
    <name evidence="1" type="primary">lysZ</name>
    <name type="synonym">argB</name>
    <name type="ordered locus">PAE2882</name>
</gene>
<dbReference type="EC" id="2.7.2.17" evidence="1"/>
<dbReference type="EC" id="2.7.2.19" evidence="1"/>
<dbReference type="EMBL" id="AE009441">
    <property type="protein sequence ID" value="AAL64509.1"/>
    <property type="molecule type" value="Genomic_DNA"/>
</dbReference>
<dbReference type="RefSeq" id="WP_011008977.1">
    <property type="nucleotide sequence ID" value="NC_003364.1"/>
</dbReference>
<dbReference type="SMR" id="Q8ZU99"/>
<dbReference type="FunCoup" id="Q8ZU99">
    <property type="interactions" value="122"/>
</dbReference>
<dbReference type="STRING" id="178306.PAE2882"/>
<dbReference type="EnsemblBacteria" id="AAL64509">
    <property type="protein sequence ID" value="AAL64509"/>
    <property type="gene ID" value="PAE2882"/>
</dbReference>
<dbReference type="GeneID" id="1463671"/>
<dbReference type="KEGG" id="pai:PAE2882"/>
<dbReference type="PATRIC" id="fig|178306.9.peg.2154"/>
<dbReference type="eggNOG" id="arCOG00862">
    <property type="taxonomic scope" value="Archaea"/>
</dbReference>
<dbReference type="HOGENOM" id="CLU_053680_2_0_2"/>
<dbReference type="InParanoid" id="Q8ZU99"/>
<dbReference type="UniPathway" id="UPA00033">
    <property type="reaction ID" value="UER00036"/>
</dbReference>
<dbReference type="UniPathway" id="UPA00068"/>
<dbReference type="Proteomes" id="UP000002439">
    <property type="component" value="Chromosome"/>
</dbReference>
<dbReference type="GO" id="GO:0005737">
    <property type="term" value="C:cytoplasm"/>
    <property type="evidence" value="ECO:0007669"/>
    <property type="project" value="UniProtKB-SubCell"/>
</dbReference>
<dbReference type="GO" id="GO:0003991">
    <property type="term" value="F:acetylglutamate kinase activity"/>
    <property type="evidence" value="ECO:0000318"/>
    <property type="project" value="GO_Central"/>
</dbReference>
<dbReference type="GO" id="GO:0005524">
    <property type="term" value="F:ATP binding"/>
    <property type="evidence" value="ECO:0007669"/>
    <property type="project" value="UniProtKB-KW"/>
</dbReference>
<dbReference type="GO" id="GO:0043744">
    <property type="term" value="F:N2-acetyl-L-aminoadipate kinase activity"/>
    <property type="evidence" value="ECO:0007669"/>
    <property type="project" value="RHEA"/>
</dbReference>
<dbReference type="GO" id="GO:0042450">
    <property type="term" value="P:arginine biosynthetic process via ornithine"/>
    <property type="evidence" value="ECO:0007669"/>
    <property type="project" value="UniProtKB-UniRule"/>
</dbReference>
<dbReference type="GO" id="GO:0006526">
    <property type="term" value="P:L-arginine biosynthetic process"/>
    <property type="evidence" value="ECO:0000318"/>
    <property type="project" value="GO_Central"/>
</dbReference>
<dbReference type="GO" id="GO:0019878">
    <property type="term" value="P:lysine biosynthetic process via aminoadipic acid"/>
    <property type="evidence" value="ECO:0007669"/>
    <property type="project" value="UniProtKB-UniRule"/>
</dbReference>
<dbReference type="CDD" id="cd04251">
    <property type="entry name" value="AAK_NAGK-UC"/>
    <property type="match status" value="1"/>
</dbReference>
<dbReference type="Gene3D" id="3.40.1160.10">
    <property type="entry name" value="Acetylglutamate kinase-like"/>
    <property type="match status" value="1"/>
</dbReference>
<dbReference type="HAMAP" id="MF_02082">
    <property type="entry name" value="LysZ"/>
    <property type="match status" value="1"/>
</dbReference>
<dbReference type="InterPro" id="IPR036393">
    <property type="entry name" value="AceGlu_kinase-like_sf"/>
</dbReference>
<dbReference type="InterPro" id="IPR004662">
    <property type="entry name" value="AcgluKinase_fam"/>
</dbReference>
<dbReference type="InterPro" id="IPR001048">
    <property type="entry name" value="Asp/Glu/Uridylate_kinase"/>
</dbReference>
<dbReference type="InterPro" id="IPR037529">
    <property type="entry name" value="LysZ"/>
</dbReference>
<dbReference type="NCBIfam" id="TIGR00761">
    <property type="entry name" value="argB"/>
    <property type="match status" value="1"/>
</dbReference>
<dbReference type="NCBIfam" id="NF010662">
    <property type="entry name" value="PRK14058.1-4"/>
    <property type="match status" value="1"/>
</dbReference>
<dbReference type="PANTHER" id="PTHR23342">
    <property type="entry name" value="N-ACETYLGLUTAMATE SYNTHASE"/>
    <property type="match status" value="1"/>
</dbReference>
<dbReference type="PANTHER" id="PTHR23342:SF0">
    <property type="entry name" value="N-ACETYLGLUTAMATE SYNTHASE, MITOCHONDRIAL"/>
    <property type="match status" value="1"/>
</dbReference>
<dbReference type="Pfam" id="PF00696">
    <property type="entry name" value="AA_kinase"/>
    <property type="match status" value="1"/>
</dbReference>
<dbReference type="PIRSF" id="PIRSF000728">
    <property type="entry name" value="NAGK"/>
    <property type="match status" value="1"/>
</dbReference>
<dbReference type="SUPFAM" id="SSF53633">
    <property type="entry name" value="Carbamate kinase-like"/>
    <property type="match status" value="1"/>
</dbReference>
<feature type="chain" id="PRO_0000112700" description="Putative [LysW]-aminoadipate/[LysW]-glutamate kinase">
    <location>
        <begin position="1"/>
        <end position="261"/>
    </location>
</feature>
<feature type="binding site" evidence="1">
    <location>
        <begin position="35"/>
        <end position="36"/>
    </location>
    <ligand>
        <name>substrate</name>
    </ligand>
</feature>
<feature type="binding site" evidence="1">
    <location>
        <position position="62"/>
    </location>
    <ligand>
        <name>substrate</name>
    </ligand>
</feature>
<feature type="binding site" evidence="1">
    <location>
        <position position="162"/>
    </location>
    <ligand>
        <name>substrate</name>
    </ligand>
</feature>
<feature type="site" description="Transition state stabilizer" evidence="1">
    <location>
        <position position="5"/>
    </location>
</feature>
<feature type="site" description="Transition state stabilizer" evidence="1">
    <location>
        <position position="221"/>
    </location>
</feature>
<sequence>MIVVKIGGSVVCKDASKVIQNLPKYADRAVVIHGGGCLVNELLKRMGIEPKFLTHPGGLVSRYTDWETLKVFVMAMGWINKYIVASLHGLGVQALGLTGADLGVVVAKRKERVLVIDERGRQRVVDGGYVGKIAEIRVDKLTPPPLKVLAPVAVSEKGELLNIDGDQLAFDVAREAKAERLILLSDVEGLILGGKVVPRLTPEEAEKLVKSEEVRGGMKRKLLMASEAAKLGIEVVISSGLVDSPIDAALNGAGTHIIKNI</sequence>